<gene>
    <name evidence="1" type="primary">era</name>
    <name type="ordered locus">bll5060</name>
</gene>
<dbReference type="EMBL" id="AF065159">
    <property type="protein sequence ID" value="AAD02940.2"/>
    <property type="molecule type" value="Genomic_DNA"/>
</dbReference>
<dbReference type="EMBL" id="BA000040">
    <property type="protein sequence ID" value="BAC50325.1"/>
    <property type="molecule type" value="Genomic_DNA"/>
</dbReference>
<dbReference type="RefSeq" id="NP_771700.1">
    <property type="nucleotide sequence ID" value="NC_004463.1"/>
</dbReference>
<dbReference type="RefSeq" id="WP_011087821.1">
    <property type="nucleotide sequence ID" value="NC_004463.1"/>
</dbReference>
<dbReference type="SMR" id="O69162"/>
<dbReference type="FunCoup" id="O69162">
    <property type="interactions" value="644"/>
</dbReference>
<dbReference type="STRING" id="224911.AAV28_22670"/>
<dbReference type="EnsemblBacteria" id="BAC50325">
    <property type="protein sequence ID" value="BAC50325"/>
    <property type="gene ID" value="BAC50325"/>
</dbReference>
<dbReference type="GeneID" id="46492067"/>
<dbReference type="KEGG" id="bja:bll5060"/>
<dbReference type="PATRIC" id="fig|224911.44.peg.4928"/>
<dbReference type="eggNOG" id="COG1159">
    <property type="taxonomic scope" value="Bacteria"/>
</dbReference>
<dbReference type="HOGENOM" id="CLU_038009_1_1_5"/>
<dbReference type="InParanoid" id="O69162"/>
<dbReference type="OrthoDB" id="9805918at2"/>
<dbReference type="PhylomeDB" id="O69162"/>
<dbReference type="Proteomes" id="UP000002526">
    <property type="component" value="Chromosome"/>
</dbReference>
<dbReference type="GO" id="GO:0005829">
    <property type="term" value="C:cytosol"/>
    <property type="evidence" value="ECO:0000318"/>
    <property type="project" value="GO_Central"/>
</dbReference>
<dbReference type="GO" id="GO:0005886">
    <property type="term" value="C:plasma membrane"/>
    <property type="evidence" value="ECO:0007669"/>
    <property type="project" value="UniProtKB-SubCell"/>
</dbReference>
<dbReference type="GO" id="GO:0005525">
    <property type="term" value="F:GTP binding"/>
    <property type="evidence" value="ECO:0007669"/>
    <property type="project" value="UniProtKB-UniRule"/>
</dbReference>
<dbReference type="GO" id="GO:0003924">
    <property type="term" value="F:GTPase activity"/>
    <property type="evidence" value="ECO:0007669"/>
    <property type="project" value="UniProtKB-UniRule"/>
</dbReference>
<dbReference type="GO" id="GO:0043024">
    <property type="term" value="F:ribosomal small subunit binding"/>
    <property type="evidence" value="ECO:0000318"/>
    <property type="project" value="GO_Central"/>
</dbReference>
<dbReference type="GO" id="GO:0019843">
    <property type="term" value="F:rRNA binding"/>
    <property type="evidence" value="ECO:0000318"/>
    <property type="project" value="GO_Central"/>
</dbReference>
<dbReference type="GO" id="GO:0070181">
    <property type="term" value="F:small ribosomal subunit rRNA binding"/>
    <property type="evidence" value="ECO:0007669"/>
    <property type="project" value="UniProtKB-UniRule"/>
</dbReference>
<dbReference type="GO" id="GO:0000028">
    <property type="term" value="P:ribosomal small subunit assembly"/>
    <property type="evidence" value="ECO:0000318"/>
    <property type="project" value="GO_Central"/>
</dbReference>
<dbReference type="CDD" id="cd04163">
    <property type="entry name" value="Era"/>
    <property type="match status" value="1"/>
</dbReference>
<dbReference type="CDD" id="cd22534">
    <property type="entry name" value="KH-II_Era"/>
    <property type="match status" value="1"/>
</dbReference>
<dbReference type="FunFam" id="3.40.50.300:FF:001190">
    <property type="entry name" value="GTP-binding protein ERG"/>
    <property type="match status" value="1"/>
</dbReference>
<dbReference type="FunFam" id="3.30.300.20:FF:000031">
    <property type="entry name" value="GTPase Era"/>
    <property type="match status" value="1"/>
</dbReference>
<dbReference type="Gene3D" id="3.30.300.20">
    <property type="match status" value="1"/>
</dbReference>
<dbReference type="Gene3D" id="3.40.50.300">
    <property type="entry name" value="P-loop containing nucleotide triphosphate hydrolases"/>
    <property type="match status" value="1"/>
</dbReference>
<dbReference type="HAMAP" id="MF_00367">
    <property type="entry name" value="GTPase_Era"/>
    <property type="match status" value="1"/>
</dbReference>
<dbReference type="InterPro" id="IPR030388">
    <property type="entry name" value="G_ERA_dom"/>
</dbReference>
<dbReference type="InterPro" id="IPR006073">
    <property type="entry name" value="GTP-bd"/>
</dbReference>
<dbReference type="InterPro" id="IPR005662">
    <property type="entry name" value="GTPase_Era-like"/>
</dbReference>
<dbReference type="InterPro" id="IPR015946">
    <property type="entry name" value="KH_dom-like_a/b"/>
</dbReference>
<dbReference type="InterPro" id="IPR004044">
    <property type="entry name" value="KH_dom_type_2"/>
</dbReference>
<dbReference type="InterPro" id="IPR009019">
    <property type="entry name" value="KH_sf_prok-type"/>
</dbReference>
<dbReference type="InterPro" id="IPR027417">
    <property type="entry name" value="P-loop_NTPase"/>
</dbReference>
<dbReference type="InterPro" id="IPR005225">
    <property type="entry name" value="Small_GTP-bd"/>
</dbReference>
<dbReference type="NCBIfam" id="TIGR00436">
    <property type="entry name" value="era"/>
    <property type="match status" value="1"/>
</dbReference>
<dbReference type="NCBIfam" id="NF000908">
    <property type="entry name" value="PRK00089.1"/>
    <property type="match status" value="1"/>
</dbReference>
<dbReference type="NCBIfam" id="TIGR00231">
    <property type="entry name" value="small_GTP"/>
    <property type="match status" value="1"/>
</dbReference>
<dbReference type="PANTHER" id="PTHR42698">
    <property type="entry name" value="GTPASE ERA"/>
    <property type="match status" value="1"/>
</dbReference>
<dbReference type="PANTHER" id="PTHR42698:SF1">
    <property type="entry name" value="GTPASE ERA, MITOCHONDRIAL"/>
    <property type="match status" value="1"/>
</dbReference>
<dbReference type="Pfam" id="PF07650">
    <property type="entry name" value="KH_2"/>
    <property type="match status" value="1"/>
</dbReference>
<dbReference type="Pfam" id="PF01926">
    <property type="entry name" value="MMR_HSR1"/>
    <property type="match status" value="1"/>
</dbReference>
<dbReference type="SUPFAM" id="SSF52540">
    <property type="entry name" value="P-loop containing nucleoside triphosphate hydrolases"/>
    <property type="match status" value="1"/>
</dbReference>
<dbReference type="SUPFAM" id="SSF54814">
    <property type="entry name" value="Prokaryotic type KH domain (KH-domain type II)"/>
    <property type="match status" value="1"/>
</dbReference>
<dbReference type="PROSITE" id="PS51713">
    <property type="entry name" value="G_ERA"/>
    <property type="match status" value="1"/>
</dbReference>
<dbReference type="PROSITE" id="PS50823">
    <property type="entry name" value="KH_TYPE_2"/>
    <property type="match status" value="1"/>
</dbReference>
<accession>O69162</accession>
<sequence>MTVEASGEAPAATRCGFVALIGAPNVGKSTLVNALVGAKVTIVSRKVQTTRALIRGIVIENNAQIILVDTPGIFSPKRRLDRAMVSTAWSGAHDADLVCVLLDAKTGIDEEAEAILAKAASVNHDKILVINKVDLVQREKLLALAQAANERMPFAKTFMIAAISGDGVDDLRSTLAEMVPPGPFLYPEDQMSDAPMRHLAAEITREKIYRKLHQELPYQSTVETDKWEERKDKSVRIEQTIFVERESQRKIVLGKGGATIKSIGADSRKEISEILGVPVHLFLFVKVRENWGDDPDRYREMGLEFPKE</sequence>
<reference key="1">
    <citation type="submission" date="2000-01" db="EMBL/GenBank/DDBJ databases">
        <title>Extended DNA sequencing in the upstream region of sipF in Bradyrhizobium japonicum.</title>
        <authorList>
            <person name="Mueller P."/>
            <person name="Stingel D."/>
        </authorList>
    </citation>
    <scope>NUCLEOTIDE SEQUENCE [GENOMIC DNA]</scope>
    <source>
        <strain>USDA 110spc4</strain>
    </source>
</reference>
<reference key="2">
    <citation type="journal article" date="2002" name="DNA Res.">
        <title>Complete genomic sequence of nitrogen-fixing symbiotic bacterium Bradyrhizobium japonicum USDA110.</title>
        <authorList>
            <person name="Kaneko T."/>
            <person name="Nakamura Y."/>
            <person name="Sato S."/>
            <person name="Minamisawa K."/>
            <person name="Uchiumi T."/>
            <person name="Sasamoto S."/>
            <person name="Watanabe A."/>
            <person name="Idesawa K."/>
            <person name="Iriguchi M."/>
            <person name="Kawashima K."/>
            <person name="Kohara M."/>
            <person name="Matsumoto M."/>
            <person name="Shimpo S."/>
            <person name="Tsuruoka H."/>
            <person name="Wada T."/>
            <person name="Yamada M."/>
            <person name="Tabata S."/>
        </authorList>
    </citation>
    <scope>NUCLEOTIDE SEQUENCE [LARGE SCALE GENOMIC DNA]</scope>
    <source>
        <strain>JCM 10833 / BCRC 13528 / IAM 13628 / NBRC 14792 / USDA 110</strain>
    </source>
</reference>
<reference key="3">
    <citation type="journal article" date="1998" name="Mol. Gen. Genet.">
        <title>A second gene for type I signal peptidase in Bradyrhizobium japonicum, sipF, is located near genes involved in RNA processing and cell division.</title>
        <authorList>
            <person name="Bairl A."/>
            <person name="Mueller P."/>
        </authorList>
    </citation>
    <scope>NUCLEOTIDE SEQUENCE [GENOMIC DNA] OF 1-208</scope>
    <source>
        <strain>USDA 110spc4</strain>
    </source>
</reference>
<evidence type="ECO:0000255" key="1">
    <source>
        <dbReference type="HAMAP-Rule" id="MF_00367"/>
    </source>
</evidence>
<evidence type="ECO:0000255" key="2">
    <source>
        <dbReference type="PROSITE-ProRule" id="PRU01050"/>
    </source>
</evidence>
<evidence type="ECO:0000305" key="3"/>
<feature type="chain" id="PRO_0000179999" description="GTPase Era">
    <location>
        <begin position="1"/>
        <end position="308"/>
    </location>
</feature>
<feature type="domain" description="Era-type G" evidence="2">
    <location>
        <begin position="14"/>
        <end position="181"/>
    </location>
</feature>
<feature type="domain" description="KH type-2" evidence="1">
    <location>
        <begin position="212"/>
        <end position="289"/>
    </location>
</feature>
<feature type="region of interest" description="G1" evidence="2">
    <location>
        <begin position="22"/>
        <end position="29"/>
    </location>
</feature>
<feature type="region of interest" description="G2" evidence="2">
    <location>
        <begin position="48"/>
        <end position="52"/>
    </location>
</feature>
<feature type="region of interest" description="G3" evidence="2">
    <location>
        <begin position="69"/>
        <end position="72"/>
    </location>
</feature>
<feature type="region of interest" description="G4" evidence="2">
    <location>
        <begin position="131"/>
        <end position="134"/>
    </location>
</feature>
<feature type="region of interest" description="G5" evidence="2">
    <location>
        <begin position="160"/>
        <end position="162"/>
    </location>
</feature>
<feature type="binding site" evidence="1">
    <location>
        <begin position="22"/>
        <end position="29"/>
    </location>
    <ligand>
        <name>GTP</name>
        <dbReference type="ChEBI" id="CHEBI:37565"/>
    </ligand>
</feature>
<feature type="binding site" evidence="1">
    <location>
        <begin position="69"/>
        <end position="73"/>
    </location>
    <ligand>
        <name>GTP</name>
        <dbReference type="ChEBI" id="CHEBI:37565"/>
    </ligand>
</feature>
<feature type="binding site" evidence="1">
    <location>
        <begin position="131"/>
        <end position="134"/>
    </location>
    <ligand>
        <name>GTP</name>
        <dbReference type="ChEBI" id="CHEBI:37565"/>
    </ligand>
</feature>
<feature type="sequence conflict" description="In Ref. 1; AAD02940." evidence="3" ref="1">
    <original>D</original>
    <variation>AR</variation>
    <location>
        <position position="225"/>
    </location>
</feature>
<feature type="sequence conflict" description="In Ref. 1; AAD02940." evidence="3" ref="1">
    <original>E</original>
    <variation>A</variation>
    <location>
        <position position="229"/>
    </location>
</feature>
<feature type="sequence conflict" description="In Ref. 1; AAD02940." evidence="3" ref="1">
    <original>D</original>
    <variation>A</variation>
    <location>
        <position position="232"/>
    </location>
</feature>
<proteinExistence type="inferred from homology"/>
<comment type="function">
    <text evidence="1">An essential GTPase that binds both GDP and GTP, with rapid nucleotide exchange. Plays a role in 16S rRNA processing and 30S ribosomal subunit biogenesis and possibly also in cell cycle regulation and energy metabolism.</text>
</comment>
<comment type="subunit">
    <text evidence="1">Monomer.</text>
</comment>
<comment type="subcellular location">
    <subcellularLocation>
        <location>Cytoplasm</location>
    </subcellularLocation>
    <subcellularLocation>
        <location evidence="1">Cell inner membrane</location>
        <topology evidence="1">Peripheral membrane protein</topology>
    </subcellularLocation>
</comment>
<comment type="similarity">
    <text evidence="1 2">Belongs to the TRAFAC class TrmE-Era-EngA-EngB-Septin-like GTPase superfamily. Era GTPase family.</text>
</comment>
<organism>
    <name type="scientific">Bradyrhizobium diazoefficiens (strain JCM 10833 / BCRC 13528 / IAM 13628 / NBRC 14792 / USDA 110)</name>
    <dbReference type="NCBI Taxonomy" id="224911"/>
    <lineage>
        <taxon>Bacteria</taxon>
        <taxon>Pseudomonadati</taxon>
        <taxon>Pseudomonadota</taxon>
        <taxon>Alphaproteobacteria</taxon>
        <taxon>Hyphomicrobiales</taxon>
        <taxon>Nitrobacteraceae</taxon>
        <taxon>Bradyrhizobium</taxon>
    </lineage>
</organism>
<name>ERA_BRADU</name>
<keyword id="KW-0997">Cell inner membrane</keyword>
<keyword id="KW-1003">Cell membrane</keyword>
<keyword id="KW-0963">Cytoplasm</keyword>
<keyword id="KW-0342">GTP-binding</keyword>
<keyword id="KW-0472">Membrane</keyword>
<keyword id="KW-0547">Nucleotide-binding</keyword>
<keyword id="KW-1185">Reference proteome</keyword>
<keyword id="KW-0690">Ribosome biogenesis</keyword>
<keyword id="KW-0694">RNA-binding</keyword>
<keyword id="KW-0699">rRNA-binding</keyword>
<protein>
    <recommendedName>
        <fullName evidence="1">GTPase Era</fullName>
    </recommendedName>
</protein>